<comment type="subcellular location">
    <subcellularLocation>
        <location evidence="1">Secreted</location>
    </subcellularLocation>
</comment>
<comment type="similarity">
    <text evidence="3">Belongs to the DEFL family.</text>
</comment>
<dbReference type="EMBL" id="AC011807">
    <property type="status" value="NOT_ANNOTATED_CDS"/>
    <property type="molecule type" value="Genomic_DNA"/>
</dbReference>
<dbReference type="EMBL" id="CP002684">
    <property type="protein sequence ID" value="AEE32463.1"/>
    <property type="molecule type" value="Genomic_DNA"/>
</dbReference>
<dbReference type="EMBL" id="DQ912212">
    <property type="protein sequence ID" value="ABI34020.1"/>
    <property type="molecule type" value="mRNA"/>
</dbReference>
<dbReference type="EMBL" id="EF182771">
    <property type="status" value="NOT_ANNOTATED_CDS"/>
    <property type="molecule type" value="mRNA"/>
</dbReference>
<dbReference type="RefSeq" id="NP_001031163.1">
    <property type="nucleotide sequence ID" value="NM_001036086.3"/>
</dbReference>
<dbReference type="STRING" id="3702.Q2V4H7"/>
<dbReference type="PaxDb" id="3702-AT1G49715.1"/>
<dbReference type="EnsemblPlants" id="AT1G49715.1">
    <property type="protein sequence ID" value="AT1G49715.1"/>
    <property type="gene ID" value="AT1G49715"/>
</dbReference>
<dbReference type="GeneID" id="3767420"/>
<dbReference type="Gramene" id="AT1G49715.1">
    <property type="protein sequence ID" value="AT1G49715.1"/>
    <property type="gene ID" value="AT1G49715"/>
</dbReference>
<dbReference type="KEGG" id="ath:AT1G49715"/>
<dbReference type="Araport" id="AT1G49715"/>
<dbReference type="TAIR" id="AT1G49715"/>
<dbReference type="HOGENOM" id="CLU_196273_0_0_1"/>
<dbReference type="InParanoid" id="Q2V4H7"/>
<dbReference type="OrthoDB" id="1114388at2759"/>
<dbReference type="PhylomeDB" id="Q2V4H7"/>
<dbReference type="PRO" id="PR:Q2V4H7"/>
<dbReference type="Proteomes" id="UP000006548">
    <property type="component" value="Chromosome 1"/>
</dbReference>
<dbReference type="ExpressionAtlas" id="Q2V4H7">
    <property type="expression patterns" value="baseline and differential"/>
</dbReference>
<dbReference type="GO" id="GO:0005576">
    <property type="term" value="C:extracellular region"/>
    <property type="evidence" value="ECO:0007669"/>
    <property type="project" value="UniProtKB-SubCell"/>
</dbReference>
<dbReference type="GO" id="GO:0050832">
    <property type="term" value="P:defense response to fungus"/>
    <property type="evidence" value="ECO:0007669"/>
    <property type="project" value="UniProtKB-KW"/>
</dbReference>
<dbReference type="GO" id="GO:0031640">
    <property type="term" value="P:killing of cells of another organism"/>
    <property type="evidence" value="ECO:0007669"/>
    <property type="project" value="UniProtKB-KW"/>
</dbReference>
<keyword id="KW-0929">Antimicrobial</keyword>
<keyword id="KW-1015">Disulfide bond</keyword>
<keyword id="KW-0295">Fungicide</keyword>
<keyword id="KW-0611">Plant defense</keyword>
<keyword id="KW-1185">Reference proteome</keyword>
<keyword id="KW-0964">Secreted</keyword>
<keyword id="KW-0732">Signal</keyword>
<accession>Q2V4H7</accession>
<proteinExistence type="inferred from homology"/>
<evidence type="ECO:0000250" key="1"/>
<evidence type="ECO:0000255" key="2"/>
<evidence type="ECO:0000305" key="3"/>
<sequence>MAKATSSLVVPIIFLVIFALVEQNTGCFDYDVYQPCDHCRERCLKYYPVTRKAICRKNHCVCIGPCPNDKAIPNVKLFKNVKEQILS</sequence>
<reference key="1">
    <citation type="journal article" date="2000" name="Nature">
        <title>Sequence and analysis of chromosome 1 of the plant Arabidopsis thaliana.</title>
        <authorList>
            <person name="Theologis A."/>
            <person name="Ecker J.R."/>
            <person name="Palm C.J."/>
            <person name="Federspiel N.A."/>
            <person name="Kaul S."/>
            <person name="White O."/>
            <person name="Alonso J."/>
            <person name="Altafi H."/>
            <person name="Araujo R."/>
            <person name="Bowman C.L."/>
            <person name="Brooks S.Y."/>
            <person name="Buehler E."/>
            <person name="Chan A."/>
            <person name="Chao Q."/>
            <person name="Chen H."/>
            <person name="Cheuk R.F."/>
            <person name="Chin C.W."/>
            <person name="Chung M.K."/>
            <person name="Conn L."/>
            <person name="Conway A.B."/>
            <person name="Conway A.R."/>
            <person name="Creasy T.H."/>
            <person name="Dewar K."/>
            <person name="Dunn P."/>
            <person name="Etgu P."/>
            <person name="Feldblyum T.V."/>
            <person name="Feng J.-D."/>
            <person name="Fong B."/>
            <person name="Fujii C.Y."/>
            <person name="Gill J.E."/>
            <person name="Goldsmith A.D."/>
            <person name="Haas B."/>
            <person name="Hansen N.F."/>
            <person name="Hughes B."/>
            <person name="Huizar L."/>
            <person name="Hunter J.L."/>
            <person name="Jenkins J."/>
            <person name="Johnson-Hopson C."/>
            <person name="Khan S."/>
            <person name="Khaykin E."/>
            <person name="Kim C.J."/>
            <person name="Koo H.L."/>
            <person name="Kremenetskaia I."/>
            <person name="Kurtz D.B."/>
            <person name="Kwan A."/>
            <person name="Lam B."/>
            <person name="Langin-Hooper S."/>
            <person name="Lee A."/>
            <person name="Lee J.M."/>
            <person name="Lenz C.A."/>
            <person name="Li J.H."/>
            <person name="Li Y.-P."/>
            <person name="Lin X."/>
            <person name="Liu S.X."/>
            <person name="Liu Z.A."/>
            <person name="Luros J.S."/>
            <person name="Maiti R."/>
            <person name="Marziali A."/>
            <person name="Militscher J."/>
            <person name="Miranda M."/>
            <person name="Nguyen M."/>
            <person name="Nierman W.C."/>
            <person name="Osborne B.I."/>
            <person name="Pai G."/>
            <person name="Peterson J."/>
            <person name="Pham P.K."/>
            <person name="Rizzo M."/>
            <person name="Rooney T."/>
            <person name="Rowley D."/>
            <person name="Sakano H."/>
            <person name="Salzberg S.L."/>
            <person name="Schwartz J.R."/>
            <person name="Shinn P."/>
            <person name="Southwick A.M."/>
            <person name="Sun H."/>
            <person name="Tallon L.J."/>
            <person name="Tambunga G."/>
            <person name="Toriumi M.J."/>
            <person name="Town C.D."/>
            <person name="Utterback T."/>
            <person name="Van Aken S."/>
            <person name="Vaysberg M."/>
            <person name="Vysotskaia V.S."/>
            <person name="Walker M."/>
            <person name="Wu D."/>
            <person name="Yu G."/>
            <person name="Fraser C.M."/>
            <person name="Venter J.C."/>
            <person name="Davis R.W."/>
        </authorList>
    </citation>
    <scope>NUCLEOTIDE SEQUENCE [LARGE SCALE GENOMIC DNA]</scope>
    <source>
        <strain>cv. Columbia</strain>
    </source>
</reference>
<reference key="2">
    <citation type="journal article" date="2017" name="Plant J.">
        <title>Araport11: a complete reannotation of the Arabidopsis thaliana reference genome.</title>
        <authorList>
            <person name="Cheng C.Y."/>
            <person name="Krishnakumar V."/>
            <person name="Chan A.P."/>
            <person name="Thibaud-Nissen F."/>
            <person name="Schobel S."/>
            <person name="Town C.D."/>
        </authorList>
    </citation>
    <scope>GENOME REANNOTATION</scope>
    <source>
        <strain>cv. Columbia</strain>
    </source>
</reference>
<reference key="3">
    <citation type="journal article" date="2006" name="Plant Biotechnol. J.">
        <title>Simultaneous high-throughput recombinational cloning of open reading frames in closed and open configurations.</title>
        <authorList>
            <person name="Underwood B.A."/>
            <person name="Vanderhaeghen R."/>
            <person name="Whitford R."/>
            <person name="Town C.D."/>
            <person name="Hilson P."/>
        </authorList>
    </citation>
    <scope>NUCLEOTIDE SEQUENCE [LARGE SCALE MRNA]</scope>
    <source>
        <strain>cv. Columbia</strain>
    </source>
</reference>
<reference key="4">
    <citation type="journal article" date="2007" name="Plant J.">
        <title>Small cysteine-rich peptides resembling antimicrobial peptides have been under-predicted in plants.</title>
        <authorList>
            <person name="Silverstein K.A.T."/>
            <person name="Moskal W.A. Jr."/>
            <person name="Wu H.C."/>
            <person name="Underwood B.A."/>
            <person name="Graham M.A."/>
            <person name="Town C.D."/>
            <person name="VandenBosch K.A."/>
        </authorList>
    </citation>
    <scope>NUCLEOTIDE SEQUENCE [LARGE SCALE MRNA]</scope>
    <source>
        <strain>cv. Columbia</strain>
    </source>
</reference>
<reference key="5">
    <citation type="journal article" date="2005" name="Plant Physiol.">
        <title>Genome organization of more than 300 defensin-like genes in Arabidopsis.</title>
        <authorList>
            <person name="Silverstein K.A.T."/>
            <person name="Graham M.A."/>
            <person name="Paape T.D."/>
            <person name="VandenBosch K.A."/>
        </authorList>
    </citation>
    <scope>GENE FAMILY</scope>
</reference>
<gene>
    <name type="ordered locus">At1g49715</name>
    <name type="ORF">F14J22</name>
</gene>
<organism>
    <name type="scientific">Arabidopsis thaliana</name>
    <name type="common">Mouse-ear cress</name>
    <dbReference type="NCBI Taxonomy" id="3702"/>
    <lineage>
        <taxon>Eukaryota</taxon>
        <taxon>Viridiplantae</taxon>
        <taxon>Streptophyta</taxon>
        <taxon>Embryophyta</taxon>
        <taxon>Tracheophyta</taxon>
        <taxon>Spermatophyta</taxon>
        <taxon>Magnoliopsida</taxon>
        <taxon>eudicotyledons</taxon>
        <taxon>Gunneridae</taxon>
        <taxon>Pentapetalae</taxon>
        <taxon>rosids</taxon>
        <taxon>malvids</taxon>
        <taxon>Brassicales</taxon>
        <taxon>Brassicaceae</taxon>
        <taxon>Camelineae</taxon>
        <taxon>Arabidopsis</taxon>
    </lineage>
</organism>
<name>DF175_ARATH</name>
<protein>
    <recommendedName>
        <fullName>Defensin-like protein 175</fullName>
    </recommendedName>
</protein>
<feature type="signal peptide" evidence="2">
    <location>
        <begin position="1"/>
        <end position="23"/>
    </location>
</feature>
<feature type="chain" id="PRO_0000379686" description="Defensin-like protein 175">
    <location>
        <begin position="24"/>
        <end position="87"/>
    </location>
</feature>
<feature type="disulfide bond" evidence="1">
    <location>
        <begin position="27"/>
        <end position="66"/>
    </location>
</feature>
<feature type="disulfide bond" evidence="1">
    <location>
        <begin position="36"/>
        <end position="55"/>
    </location>
</feature>
<feature type="disulfide bond" evidence="1">
    <location>
        <begin position="39"/>
        <end position="60"/>
    </location>
</feature>
<feature type="disulfide bond" evidence="1">
    <location>
        <begin position="43"/>
        <end position="62"/>
    </location>
</feature>
<feature type="sequence conflict" description="In Ref. 4; EF182771." evidence="3" ref="4">
    <original>T</original>
    <variation>A</variation>
    <location>
        <position position="50"/>
    </location>
</feature>